<feature type="chain" id="PRO_0000046762" description="Mitochondrial import receptor subunit TOM7-1">
    <location>
        <begin position="1"/>
        <end position="75"/>
    </location>
</feature>
<feature type="topological domain" description="Cytoplasmic" evidence="1">
    <location>
        <begin position="1"/>
        <end position="46"/>
    </location>
</feature>
<feature type="transmembrane region" description="Helical" evidence="3">
    <location>
        <begin position="47"/>
        <end position="64"/>
    </location>
</feature>
<feature type="topological domain" description="Mitochondrial intermembrane" evidence="1">
    <location>
        <begin position="65"/>
        <end position="75"/>
    </location>
</feature>
<feature type="region of interest" description="Disordered" evidence="4">
    <location>
        <begin position="1"/>
        <end position="28"/>
    </location>
</feature>
<feature type="modified residue" description="N-acetylmethionine" evidence="10">
    <location>
        <position position="1"/>
    </location>
</feature>
<reference key="1">
    <citation type="journal article" date="1997" name="DNA Res.">
        <title>Structural analysis of Arabidopsis thaliana chromosome 5. I. Sequence features of the 1.6 Mb regions covered by twenty physically assigned P1 clones.</title>
        <authorList>
            <person name="Sato S."/>
            <person name="Kotani H."/>
            <person name="Nakamura Y."/>
            <person name="Kaneko T."/>
            <person name="Asamizu E."/>
            <person name="Fukami M."/>
            <person name="Miyajima N."/>
            <person name="Tabata S."/>
        </authorList>
    </citation>
    <scope>NUCLEOTIDE SEQUENCE [LARGE SCALE GENOMIC DNA]</scope>
    <source>
        <strain>cv. Columbia</strain>
    </source>
</reference>
<reference evidence="8" key="2">
    <citation type="journal article" date="2017" name="Plant J.">
        <title>Araport11: a complete reannotation of the Arabidopsis thaliana reference genome.</title>
        <authorList>
            <person name="Cheng C.Y."/>
            <person name="Krishnakumar V."/>
            <person name="Chan A.P."/>
            <person name="Thibaud-Nissen F."/>
            <person name="Schobel S."/>
            <person name="Town C.D."/>
        </authorList>
    </citation>
    <scope>GENOME REANNOTATION</scope>
    <source>
        <strain>cv. Columbia</strain>
    </source>
</reference>
<reference key="3">
    <citation type="journal article" date="2003" name="Science">
        <title>Empirical analysis of transcriptional activity in the Arabidopsis genome.</title>
        <authorList>
            <person name="Yamada K."/>
            <person name="Lim J."/>
            <person name="Dale J.M."/>
            <person name="Chen H."/>
            <person name="Shinn P."/>
            <person name="Palm C.J."/>
            <person name="Southwick A.M."/>
            <person name="Wu H.C."/>
            <person name="Kim C.J."/>
            <person name="Nguyen M."/>
            <person name="Pham P.K."/>
            <person name="Cheuk R.F."/>
            <person name="Karlin-Newmann G."/>
            <person name="Liu S.X."/>
            <person name="Lam B."/>
            <person name="Sakano H."/>
            <person name="Wu T."/>
            <person name="Yu G."/>
            <person name="Miranda M."/>
            <person name="Quach H.L."/>
            <person name="Tripp M."/>
            <person name="Chang C.H."/>
            <person name="Lee J.M."/>
            <person name="Toriumi M.J."/>
            <person name="Chan M.M."/>
            <person name="Tang C.C."/>
            <person name="Onodera C.S."/>
            <person name="Deng J.M."/>
            <person name="Akiyama K."/>
            <person name="Ansari Y."/>
            <person name="Arakawa T."/>
            <person name="Banh J."/>
            <person name="Banno F."/>
            <person name="Bowser L."/>
            <person name="Brooks S.Y."/>
            <person name="Carninci P."/>
            <person name="Chao Q."/>
            <person name="Choy N."/>
            <person name="Enju A."/>
            <person name="Goldsmith A.D."/>
            <person name="Gurjal M."/>
            <person name="Hansen N.F."/>
            <person name="Hayashizaki Y."/>
            <person name="Johnson-Hopson C."/>
            <person name="Hsuan V.W."/>
            <person name="Iida K."/>
            <person name="Karnes M."/>
            <person name="Khan S."/>
            <person name="Koesema E."/>
            <person name="Ishida J."/>
            <person name="Jiang P.X."/>
            <person name="Jones T."/>
            <person name="Kawai J."/>
            <person name="Kamiya A."/>
            <person name="Meyers C."/>
            <person name="Nakajima M."/>
            <person name="Narusaka M."/>
            <person name="Seki M."/>
            <person name="Sakurai T."/>
            <person name="Satou M."/>
            <person name="Tamse R."/>
            <person name="Vaysberg M."/>
            <person name="Wallender E.K."/>
            <person name="Wong C."/>
            <person name="Yamamura Y."/>
            <person name="Yuan S."/>
            <person name="Shinozaki K."/>
            <person name="Davis R.W."/>
            <person name="Theologis A."/>
            <person name="Ecker J.R."/>
        </authorList>
    </citation>
    <scope>NUCLEOTIDE SEQUENCE [LARGE SCALE MRNA]</scope>
    <source>
        <strain>cv. Columbia</strain>
    </source>
</reference>
<reference evidence="8" key="4">
    <citation type="journal article" date="2001" name="Plant Physiol.">
        <title>Purification and characterization of the preprotein translocase of the outer mitochondrial membrane from Arabidopsis. Identification of multiple forms of TOM20.</title>
        <authorList>
            <person name="Werhahn W."/>
            <person name="Niemeyer A."/>
            <person name="Jaensch L."/>
            <person name="Kruft V."/>
            <person name="Schmitz U.K."/>
            <person name="Braun H.-P."/>
        </authorList>
    </citation>
    <scope>PROTEIN SEQUENCE OF 9-22 AND 26-33</scope>
    <scope>SUBCELLULAR LOCATION</scope>
</reference>
<reference key="5">
    <citation type="journal article" date="2003" name="Plant Physiol. Biochem.">
        <title>Identification of novel subunits of the TOM complex from Arabidopsis thaliana.</title>
        <authorList>
            <person name="Werhahn W."/>
            <person name="Jaensch L."/>
            <person name="Braun H.-P."/>
        </authorList>
    </citation>
    <scope>SUBUNIT</scope>
</reference>
<reference key="6">
    <citation type="journal article" date="2004" name="Plant Physiol.">
        <title>A transcriptomic and proteomic characterization of the Arabidopsis mitochondrial protein import apparatus and its response to mitochondrial dysfunction.</title>
        <authorList>
            <person name="Lister R."/>
            <person name="Chew O."/>
            <person name="Lee M.N."/>
            <person name="Heazlewood J.L."/>
            <person name="Clifton R."/>
            <person name="Parker K.L."/>
            <person name="Millar A.H."/>
            <person name="Whelan J."/>
        </authorList>
    </citation>
    <scope>TISSUE SPECIFICITY</scope>
</reference>
<reference key="7">
    <citation type="journal article" date="2012" name="Mol. Cell. Proteomics">
        <title>Comparative large-scale characterisation of plant vs. mammal proteins reveals similar and idiosyncratic N-alpha acetylation features.</title>
        <authorList>
            <person name="Bienvenut W.V."/>
            <person name="Sumpton D."/>
            <person name="Martinez A."/>
            <person name="Lilla S."/>
            <person name="Espagne C."/>
            <person name="Meinnel T."/>
            <person name="Giglione C."/>
        </authorList>
    </citation>
    <scope>ACETYLATION [LARGE SCALE ANALYSIS] AT MET-1</scope>
    <scope>IDENTIFICATION BY MASS SPECTROMETRY [LARGE SCALE ANALYSIS]</scope>
</reference>
<protein>
    <recommendedName>
        <fullName>Mitochondrial import receptor subunit TOM7-1</fullName>
    </recommendedName>
    <alternativeName>
        <fullName>Translocase of outer membrane 7 kDa subunit 1</fullName>
    </alternativeName>
</protein>
<name>TOM71_ARATH</name>
<comment type="function">
    <text evidence="2">Seems to act as a modulator of the dynamics of the mitochondrial protein transport machinery. Seems to promote the dissociation of subunits of the outer membrane translocase (By similarity).</text>
</comment>
<comment type="subunit">
    <text evidence="7">Forms part of the preprotein translocase complex of the outer mitochondrial membrane (TOM complex) which consists of at least 6 different proteins (TOM5, TOM6, TOM7, TOM20, TOM22/TOM9 and TOM40).</text>
</comment>
<comment type="subcellular location">
    <subcellularLocation>
        <location evidence="5">Mitochondrion outer membrane</location>
        <topology evidence="5">Single-pass membrane protein</topology>
    </subcellularLocation>
</comment>
<comment type="tissue specificity">
    <text evidence="6">Expressed in roots, flowers, young cotyledons and leaves.</text>
</comment>
<comment type="similarity">
    <text evidence="8">Belongs to the Tom7 family.</text>
</comment>
<sequence>MESTISLKVNKGKGKGSKGASSSDDKSKFDVVKEWTNWSLKKAKVVTHYGFIPLVIFVGMNSDPKPHLFQLLSPV</sequence>
<keyword id="KW-0007">Acetylation</keyword>
<keyword id="KW-0903">Direct protein sequencing</keyword>
<keyword id="KW-0472">Membrane</keyword>
<keyword id="KW-0496">Mitochondrion</keyword>
<keyword id="KW-1000">Mitochondrion outer membrane</keyword>
<keyword id="KW-0653">Protein transport</keyword>
<keyword id="KW-1185">Reference proteome</keyword>
<keyword id="KW-0812">Transmembrane</keyword>
<keyword id="KW-1133">Transmembrane helix</keyword>
<keyword id="KW-0813">Transport</keyword>
<accession>Q9ASY8</accession>
<evidence type="ECO:0000250" key="1"/>
<evidence type="ECO:0000250" key="2">
    <source>
        <dbReference type="UniProtKB" id="P53507"/>
    </source>
</evidence>
<evidence type="ECO:0000255" key="3"/>
<evidence type="ECO:0000256" key="4">
    <source>
        <dbReference type="SAM" id="MobiDB-lite"/>
    </source>
</evidence>
<evidence type="ECO:0000269" key="5">
    <source>
    </source>
</evidence>
<evidence type="ECO:0000269" key="6">
    <source>
    </source>
</evidence>
<evidence type="ECO:0000269" key="7">
    <source ref="5"/>
</evidence>
<evidence type="ECO:0000305" key="8"/>
<evidence type="ECO:0000312" key="9">
    <source>
        <dbReference type="EMBL" id="AAK32761.1"/>
    </source>
</evidence>
<evidence type="ECO:0007744" key="10">
    <source>
    </source>
</evidence>
<proteinExistence type="evidence at protein level"/>
<dbReference type="EMBL" id="AB005233">
    <property type="status" value="NOT_ANNOTATED_CDS"/>
    <property type="molecule type" value="Genomic_DNA"/>
</dbReference>
<dbReference type="EMBL" id="CP002688">
    <property type="protein sequence ID" value="AED94709.1"/>
    <property type="molecule type" value="Genomic_DNA"/>
</dbReference>
<dbReference type="EMBL" id="AF361593">
    <property type="protein sequence ID" value="AAK32761.1"/>
    <property type="molecule type" value="mRNA"/>
</dbReference>
<dbReference type="EMBL" id="AY058224">
    <property type="protein sequence ID" value="AAL15398.1"/>
    <property type="molecule type" value="mRNA"/>
</dbReference>
<dbReference type="RefSeq" id="NP_568593.1">
    <property type="nucleotide sequence ID" value="NM_123533.3"/>
</dbReference>
<dbReference type="SMR" id="Q9ASY8"/>
<dbReference type="FunCoup" id="Q9ASY8">
    <property type="interactions" value="185"/>
</dbReference>
<dbReference type="STRING" id="3702.Q9ASY8"/>
<dbReference type="iPTMnet" id="Q9ASY8"/>
<dbReference type="PaxDb" id="3702-AT5G41685.1"/>
<dbReference type="ProteomicsDB" id="234458"/>
<dbReference type="EnsemblPlants" id="AT5G41685.1">
    <property type="protein sequence ID" value="AT5G41685.1"/>
    <property type="gene ID" value="AT5G41685"/>
</dbReference>
<dbReference type="GeneID" id="834171"/>
<dbReference type="Gramene" id="AT5G41685.1">
    <property type="protein sequence ID" value="AT5G41685.1"/>
    <property type="gene ID" value="AT5G41685"/>
</dbReference>
<dbReference type="KEGG" id="ath:AT5G41685"/>
<dbReference type="Araport" id="AT5G41685"/>
<dbReference type="TAIR" id="AT5G41685"/>
<dbReference type="HOGENOM" id="CLU_173610_0_1_1"/>
<dbReference type="InParanoid" id="Q9ASY8"/>
<dbReference type="OMA" id="PEERSAC"/>
<dbReference type="OrthoDB" id="284357at2759"/>
<dbReference type="PhylomeDB" id="Q9ASY8"/>
<dbReference type="PRO" id="PR:Q9ASY8"/>
<dbReference type="Proteomes" id="UP000006548">
    <property type="component" value="Chromosome 5"/>
</dbReference>
<dbReference type="ExpressionAtlas" id="Q9ASY8">
    <property type="expression patterns" value="baseline and differential"/>
</dbReference>
<dbReference type="GO" id="GO:0005742">
    <property type="term" value="C:mitochondrial outer membrane translocase complex"/>
    <property type="evidence" value="ECO:0007669"/>
    <property type="project" value="InterPro"/>
</dbReference>
<dbReference type="GO" id="GO:0030150">
    <property type="term" value="P:protein import into mitochondrial matrix"/>
    <property type="evidence" value="ECO:0007669"/>
    <property type="project" value="InterPro"/>
</dbReference>
<dbReference type="InterPro" id="IPR012621">
    <property type="entry name" value="Tom7"/>
</dbReference>
<dbReference type="PANTHER" id="PTHR34944">
    <property type="entry name" value="MITOCHONDRIAL IMPORT RECEPTOR SUBUNIT TOM7"/>
    <property type="match status" value="1"/>
</dbReference>
<dbReference type="PANTHER" id="PTHR34944:SF2">
    <property type="entry name" value="MITOCHONDRIAL IMPORT RECEPTOR SUBUNIT TOM7"/>
    <property type="match status" value="1"/>
</dbReference>
<dbReference type="Pfam" id="PF08038">
    <property type="entry name" value="Tom7"/>
    <property type="match status" value="1"/>
</dbReference>
<organism evidence="9">
    <name type="scientific">Arabidopsis thaliana</name>
    <name type="common">Mouse-ear cress</name>
    <dbReference type="NCBI Taxonomy" id="3702"/>
    <lineage>
        <taxon>Eukaryota</taxon>
        <taxon>Viridiplantae</taxon>
        <taxon>Streptophyta</taxon>
        <taxon>Embryophyta</taxon>
        <taxon>Tracheophyta</taxon>
        <taxon>Spermatophyta</taxon>
        <taxon>Magnoliopsida</taxon>
        <taxon>eudicotyledons</taxon>
        <taxon>Gunneridae</taxon>
        <taxon>Pentapetalae</taxon>
        <taxon>rosids</taxon>
        <taxon>malvids</taxon>
        <taxon>Brassicales</taxon>
        <taxon>Brassicaceae</taxon>
        <taxon>Camelineae</taxon>
        <taxon>Arabidopsis</taxon>
    </lineage>
</organism>
<gene>
    <name type="primary">TOM7-1</name>
    <name type="ordered locus">At5g41685</name>
    <name type="ORF">MBK23.22.1</name>
</gene>